<gene>
    <name evidence="1" type="primary">slyX</name>
    <name type="ordered locus">XAC1552</name>
</gene>
<comment type="similarity">
    <text evidence="1">Belongs to the SlyX family.</text>
</comment>
<accession>Q8PM80</accession>
<name>SLYX_XANAC</name>
<organism>
    <name type="scientific">Xanthomonas axonopodis pv. citri (strain 306)</name>
    <dbReference type="NCBI Taxonomy" id="190486"/>
    <lineage>
        <taxon>Bacteria</taxon>
        <taxon>Pseudomonadati</taxon>
        <taxon>Pseudomonadota</taxon>
        <taxon>Gammaproteobacteria</taxon>
        <taxon>Lysobacterales</taxon>
        <taxon>Lysobacteraceae</taxon>
        <taxon>Xanthomonas</taxon>
    </lineage>
</organism>
<sequence length="78" mass="8844">MHEQLPLQDRALEARLIELETRLSFQEQALNELSEALADARLTGARNAELIRHLLEDLGKVRSTLFADAVDEPPPPHY</sequence>
<protein>
    <recommendedName>
        <fullName evidence="1">Protein SlyX homolog</fullName>
    </recommendedName>
</protein>
<evidence type="ECO:0000255" key="1">
    <source>
        <dbReference type="HAMAP-Rule" id="MF_00715"/>
    </source>
</evidence>
<feature type="chain" id="PRO_0000209220" description="Protein SlyX homolog">
    <location>
        <begin position="1"/>
        <end position="78"/>
    </location>
</feature>
<reference key="1">
    <citation type="journal article" date="2002" name="Nature">
        <title>Comparison of the genomes of two Xanthomonas pathogens with differing host specificities.</title>
        <authorList>
            <person name="da Silva A.C.R."/>
            <person name="Ferro J.A."/>
            <person name="Reinach F.C."/>
            <person name="Farah C.S."/>
            <person name="Furlan L.R."/>
            <person name="Quaggio R.B."/>
            <person name="Monteiro-Vitorello C.B."/>
            <person name="Van Sluys M.A."/>
            <person name="Almeida N.F. Jr."/>
            <person name="Alves L.M.C."/>
            <person name="do Amaral A.M."/>
            <person name="Bertolini M.C."/>
            <person name="Camargo L.E.A."/>
            <person name="Camarotte G."/>
            <person name="Cannavan F."/>
            <person name="Cardozo J."/>
            <person name="Chambergo F."/>
            <person name="Ciapina L.P."/>
            <person name="Cicarelli R.M.B."/>
            <person name="Coutinho L.L."/>
            <person name="Cursino-Santos J.R."/>
            <person name="El-Dorry H."/>
            <person name="Faria J.B."/>
            <person name="Ferreira A.J.S."/>
            <person name="Ferreira R.C.C."/>
            <person name="Ferro M.I.T."/>
            <person name="Formighieri E.F."/>
            <person name="Franco M.C."/>
            <person name="Greggio C.C."/>
            <person name="Gruber A."/>
            <person name="Katsuyama A.M."/>
            <person name="Kishi L.T."/>
            <person name="Leite R.P."/>
            <person name="Lemos E.G.M."/>
            <person name="Lemos M.V.F."/>
            <person name="Locali E.C."/>
            <person name="Machado M.A."/>
            <person name="Madeira A.M.B.N."/>
            <person name="Martinez-Rossi N.M."/>
            <person name="Martins E.C."/>
            <person name="Meidanis J."/>
            <person name="Menck C.F.M."/>
            <person name="Miyaki C.Y."/>
            <person name="Moon D.H."/>
            <person name="Moreira L.M."/>
            <person name="Novo M.T.M."/>
            <person name="Okura V.K."/>
            <person name="Oliveira M.C."/>
            <person name="Oliveira V.R."/>
            <person name="Pereira H.A."/>
            <person name="Rossi A."/>
            <person name="Sena J.A.D."/>
            <person name="Silva C."/>
            <person name="de Souza R.F."/>
            <person name="Spinola L.A.F."/>
            <person name="Takita M.A."/>
            <person name="Tamura R.E."/>
            <person name="Teixeira E.C."/>
            <person name="Tezza R.I.D."/>
            <person name="Trindade dos Santos M."/>
            <person name="Truffi D."/>
            <person name="Tsai S.M."/>
            <person name="White F.F."/>
            <person name="Setubal J.C."/>
            <person name="Kitajima J.P."/>
        </authorList>
    </citation>
    <scope>NUCLEOTIDE SEQUENCE [LARGE SCALE GENOMIC DNA]</scope>
    <source>
        <strain>306</strain>
    </source>
</reference>
<dbReference type="EMBL" id="AE008923">
    <property type="protein sequence ID" value="AAM36421.1"/>
    <property type="molecule type" value="Genomic_DNA"/>
</dbReference>
<dbReference type="RefSeq" id="WP_011050997.1">
    <property type="nucleotide sequence ID" value="NC_003919.1"/>
</dbReference>
<dbReference type="SMR" id="Q8PM80"/>
<dbReference type="KEGG" id="xac:XAC1552"/>
<dbReference type="eggNOG" id="COG2900">
    <property type="taxonomic scope" value="Bacteria"/>
</dbReference>
<dbReference type="HOGENOM" id="CLU_180796_4_2_6"/>
<dbReference type="Proteomes" id="UP000000576">
    <property type="component" value="Chromosome"/>
</dbReference>
<dbReference type="Gene3D" id="1.20.5.300">
    <property type="match status" value="1"/>
</dbReference>
<dbReference type="HAMAP" id="MF_00715">
    <property type="entry name" value="SlyX"/>
    <property type="match status" value="1"/>
</dbReference>
<dbReference type="InterPro" id="IPR007236">
    <property type="entry name" value="SlyX"/>
</dbReference>
<dbReference type="NCBIfam" id="NF002024">
    <property type="entry name" value="PRK00846.1"/>
    <property type="match status" value="1"/>
</dbReference>
<dbReference type="PANTHER" id="PTHR36508">
    <property type="entry name" value="PROTEIN SLYX"/>
    <property type="match status" value="1"/>
</dbReference>
<dbReference type="PANTHER" id="PTHR36508:SF1">
    <property type="entry name" value="PROTEIN SLYX"/>
    <property type="match status" value="1"/>
</dbReference>
<dbReference type="Pfam" id="PF04102">
    <property type="entry name" value="SlyX"/>
    <property type="match status" value="1"/>
</dbReference>
<proteinExistence type="inferred from homology"/>